<protein>
    <recommendedName>
        <fullName evidence="1">Oxygen-dependent coproporphyrinogen-III oxidase</fullName>
        <shortName evidence="1">CPO</shortName>
        <shortName evidence="1">Coprogen oxidase</shortName>
        <shortName evidence="1">Coproporphyrinogenase</shortName>
        <ecNumber evidence="1">1.3.3.3</ecNumber>
    </recommendedName>
</protein>
<reference key="1">
    <citation type="journal article" date="2011" name="Stand. Genomic Sci.">
        <title>Complete genome sequence of 'Thioalkalivibrio sulfidophilus' HL-EbGr7.</title>
        <authorList>
            <person name="Muyzer G."/>
            <person name="Sorokin D.Y."/>
            <person name="Mavromatis K."/>
            <person name="Lapidus A."/>
            <person name="Clum A."/>
            <person name="Ivanova N."/>
            <person name="Pati A."/>
            <person name="d'Haeseleer P."/>
            <person name="Woyke T."/>
            <person name="Kyrpides N.C."/>
        </authorList>
    </citation>
    <scope>NUCLEOTIDE SEQUENCE [LARGE SCALE GENOMIC DNA]</scope>
    <source>
        <strain>HL-EbGR7</strain>
    </source>
</reference>
<keyword id="KW-0963">Cytoplasm</keyword>
<keyword id="KW-0350">Heme biosynthesis</keyword>
<keyword id="KW-0479">Metal-binding</keyword>
<keyword id="KW-0560">Oxidoreductase</keyword>
<keyword id="KW-0627">Porphyrin biosynthesis</keyword>
<keyword id="KW-1185">Reference proteome</keyword>
<proteinExistence type="inferred from homology"/>
<accession>B8GTF9</accession>
<comment type="function">
    <text evidence="1">Involved in the heme biosynthesis. Catalyzes the aerobic oxidative decarboxylation of propionate groups of rings A and B of coproporphyrinogen-III to yield the vinyl groups in protoporphyrinogen-IX.</text>
</comment>
<comment type="catalytic activity">
    <reaction evidence="1">
        <text>coproporphyrinogen III + O2 + 2 H(+) = protoporphyrinogen IX + 2 CO2 + 2 H2O</text>
        <dbReference type="Rhea" id="RHEA:18257"/>
        <dbReference type="ChEBI" id="CHEBI:15377"/>
        <dbReference type="ChEBI" id="CHEBI:15378"/>
        <dbReference type="ChEBI" id="CHEBI:15379"/>
        <dbReference type="ChEBI" id="CHEBI:16526"/>
        <dbReference type="ChEBI" id="CHEBI:57307"/>
        <dbReference type="ChEBI" id="CHEBI:57309"/>
        <dbReference type="EC" id="1.3.3.3"/>
    </reaction>
</comment>
<comment type="cofactor">
    <cofactor evidence="1">
        <name>a divalent metal cation</name>
        <dbReference type="ChEBI" id="CHEBI:60240"/>
    </cofactor>
</comment>
<comment type="pathway">
    <text evidence="1">Porphyrin-containing compound metabolism; protoporphyrin-IX biosynthesis; protoporphyrinogen-IX from coproporphyrinogen-III (O2 route): step 1/1.</text>
</comment>
<comment type="subunit">
    <text evidence="1">Homodimer.</text>
</comment>
<comment type="subcellular location">
    <subcellularLocation>
        <location evidence="1">Cytoplasm</location>
    </subcellularLocation>
</comment>
<comment type="similarity">
    <text evidence="1">Belongs to the aerobic coproporphyrinogen-III oxidase family.</text>
</comment>
<gene>
    <name evidence="1" type="primary">hemF</name>
    <name type="ordered locus">Tgr7_0116</name>
</gene>
<dbReference type="EC" id="1.3.3.3" evidence="1"/>
<dbReference type="EMBL" id="CP001339">
    <property type="protein sequence ID" value="ACL71219.1"/>
    <property type="molecule type" value="Genomic_DNA"/>
</dbReference>
<dbReference type="RefSeq" id="WP_012636708.1">
    <property type="nucleotide sequence ID" value="NC_011901.1"/>
</dbReference>
<dbReference type="SMR" id="B8GTF9"/>
<dbReference type="STRING" id="396588.Tgr7_0116"/>
<dbReference type="KEGG" id="tgr:Tgr7_0116"/>
<dbReference type="eggNOG" id="COG0408">
    <property type="taxonomic scope" value="Bacteria"/>
</dbReference>
<dbReference type="HOGENOM" id="CLU_026169_0_1_6"/>
<dbReference type="OrthoDB" id="9777553at2"/>
<dbReference type="UniPathway" id="UPA00251">
    <property type="reaction ID" value="UER00322"/>
</dbReference>
<dbReference type="Proteomes" id="UP000002383">
    <property type="component" value="Chromosome"/>
</dbReference>
<dbReference type="GO" id="GO:0005737">
    <property type="term" value="C:cytoplasm"/>
    <property type="evidence" value="ECO:0007669"/>
    <property type="project" value="UniProtKB-SubCell"/>
</dbReference>
<dbReference type="GO" id="GO:0004109">
    <property type="term" value="F:coproporphyrinogen oxidase activity"/>
    <property type="evidence" value="ECO:0007669"/>
    <property type="project" value="UniProtKB-UniRule"/>
</dbReference>
<dbReference type="GO" id="GO:0046872">
    <property type="term" value="F:metal ion binding"/>
    <property type="evidence" value="ECO:0007669"/>
    <property type="project" value="UniProtKB-KW"/>
</dbReference>
<dbReference type="GO" id="GO:0042803">
    <property type="term" value="F:protein homodimerization activity"/>
    <property type="evidence" value="ECO:0000250"/>
    <property type="project" value="UniProtKB"/>
</dbReference>
<dbReference type="GO" id="GO:0006782">
    <property type="term" value="P:protoporphyrinogen IX biosynthetic process"/>
    <property type="evidence" value="ECO:0007669"/>
    <property type="project" value="UniProtKB-UniRule"/>
</dbReference>
<dbReference type="FunFam" id="3.40.1500.10:FF:000001">
    <property type="entry name" value="Oxygen-dependent coproporphyrinogen-III oxidase"/>
    <property type="match status" value="1"/>
</dbReference>
<dbReference type="Gene3D" id="3.40.1500.10">
    <property type="entry name" value="Coproporphyrinogen III oxidase, aerobic"/>
    <property type="match status" value="1"/>
</dbReference>
<dbReference type="HAMAP" id="MF_00333">
    <property type="entry name" value="Coprogen_oxidas"/>
    <property type="match status" value="1"/>
</dbReference>
<dbReference type="InterPro" id="IPR001260">
    <property type="entry name" value="Coprogen_oxidase_aer"/>
</dbReference>
<dbReference type="InterPro" id="IPR036406">
    <property type="entry name" value="Coprogen_oxidase_aer_sf"/>
</dbReference>
<dbReference type="InterPro" id="IPR018375">
    <property type="entry name" value="Coprogen_oxidase_CS"/>
</dbReference>
<dbReference type="NCBIfam" id="NF003727">
    <property type="entry name" value="PRK05330.1"/>
    <property type="match status" value="1"/>
</dbReference>
<dbReference type="PANTHER" id="PTHR10755">
    <property type="entry name" value="COPROPORPHYRINOGEN III OXIDASE, MITOCHONDRIAL"/>
    <property type="match status" value="1"/>
</dbReference>
<dbReference type="PANTHER" id="PTHR10755:SF0">
    <property type="entry name" value="OXYGEN-DEPENDENT COPROPORPHYRINOGEN-III OXIDASE, MITOCHONDRIAL"/>
    <property type="match status" value="1"/>
</dbReference>
<dbReference type="Pfam" id="PF01218">
    <property type="entry name" value="Coprogen_oxidas"/>
    <property type="match status" value="1"/>
</dbReference>
<dbReference type="PIRSF" id="PIRSF000166">
    <property type="entry name" value="Coproporphyri_ox"/>
    <property type="match status" value="1"/>
</dbReference>
<dbReference type="PRINTS" id="PR00073">
    <property type="entry name" value="COPRGNOXDASE"/>
</dbReference>
<dbReference type="SUPFAM" id="SSF102886">
    <property type="entry name" value="Coproporphyrinogen III oxidase"/>
    <property type="match status" value="1"/>
</dbReference>
<dbReference type="PROSITE" id="PS01021">
    <property type="entry name" value="COPROGEN_OXIDASE"/>
    <property type="match status" value="1"/>
</dbReference>
<feature type="chain" id="PRO_1000133191" description="Oxygen-dependent coproporphyrinogen-III oxidase">
    <location>
        <begin position="1"/>
        <end position="304"/>
    </location>
</feature>
<feature type="region of interest" description="Important for dimerization" evidence="1">
    <location>
        <begin position="243"/>
        <end position="278"/>
    </location>
</feature>
<feature type="active site" description="Proton donor" evidence="1">
    <location>
        <position position="109"/>
    </location>
</feature>
<feature type="binding site" evidence="1">
    <location>
        <position position="95"/>
    </location>
    <ligand>
        <name>substrate</name>
    </ligand>
</feature>
<feature type="binding site" evidence="1">
    <location>
        <position position="99"/>
    </location>
    <ligand>
        <name>a divalent metal cation</name>
        <dbReference type="ChEBI" id="CHEBI:60240"/>
    </ligand>
</feature>
<feature type="binding site" evidence="1">
    <location>
        <position position="109"/>
    </location>
    <ligand>
        <name>a divalent metal cation</name>
        <dbReference type="ChEBI" id="CHEBI:60240"/>
    </ligand>
</feature>
<feature type="binding site" evidence="1">
    <location>
        <begin position="111"/>
        <end position="113"/>
    </location>
    <ligand>
        <name>substrate</name>
    </ligand>
</feature>
<feature type="binding site" evidence="1">
    <location>
        <position position="148"/>
    </location>
    <ligand>
        <name>a divalent metal cation</name>
        <dbReference type="ChEBI" id="CHEBI:60240"/>
    </ligand>
</feature>
<feature type="binding site" evidence="1">
    <location>
        <position position="178"/>
    </location>
    <ligand>
        <name>a divalent metal cation</name>
        <dbReference type="ChEBI" id="CHEBI:60240"/>
    </ligand>
</feature>
<feature type="binding site" evidence="1">
    <location>
        <begin position="261"/>
        <end position="263"/>
    </location>
    <ligand>
        <name>substrate</name>
    </ligand>
</feature>
<feature type="site" description="Important for dimerization" evidence="1">
    <location>
        <position position="178"/>
    </location>
</feature>
<name>HEM6_THISH</name>
<sequence>MTEQVRIEPVIDYLTGLQDRICQGIAGADGSGEFKEDSWTREEGGGGRSRVLTEGAVFEQAGINFSHVTGASLPPSATAHRPELAGRRFQATGVSLVIHPRNPYVPTSHANVRFFIAEKEGAEPIWWFGGGFDLTPYYGEDEDCVHWHRVAKAACEPFGPEVYPRYKQWCDEYFFLRHRNEPRGVGGLFFDDLNEWGFEKSFAFMRSVGDHYLDAYLPIVARRKDTPYGERERDFQLYRRGRYVEFNLVYDRGTLFGLQSGGRTESILMSLPPLVRWRYNWQPEPGTPEARLYEHFLKPREWVE</sequence>
<organism>
    <name type="scientific">Thioalkalivibrio sulfidiphilus (strain HL-EbGR7)</name>
    <dbReference type="NCBI Taxonomy" id="396588"/>
    <lineage>
        <taxon>Bacteria</taxon>
        <taxon>Pseudomonadati</taxon>
        <taxon>Pseudomonadota</taxon>
        <taxon>Gammaproteobacteria</taxon>
        <taxon>Chromatiales</taxon>
        <taxon>Ectothiorhodospiraceae</taxon>
        <taxon>Thioalkalivibrio</taxon>
    </lineage>
</organism>
<evidence type="ECO:0000255" key="1">
    <source>
        <dbReference type="HAMAP-Rule" id="MF_00333"/>
    </source>
</evidence>